<comment type="function">
    <text evidence="2 5 7">Component of the integrator complex, a multiprotein complex that terminates RNA polymerase II (Pol II) transcription in the promoter-proximal region of genes (PubMed:38570683). The integrator complex provides a quality checkpoint during transcription elongation by driving premature transcription termination of transcripts that are unfavorably configured for transcriptional elongation: the complex terminates transcription by (1) catalyzing dephosphorylation of the C-terminal domain (CTD) of Pol II subunit POLR2A/RPB1 and SUPT5H/SPT5, (2) degrading the exiting nascent RNA transcript via endonuclease activity and (3) promoting the release of Pol II from bound DNA (PubMed:38570683). The integrator complex is also involved in terminating the synthesis of non-coding Pol II transcripts, such as enhancer RNAs (eRNAs), small nuclear RNAs (snRNAs), telomerase RNAs and long non-coding RNAs (lncRNAs) (PubMed:16239144). Within the integrator complex, INTS3 is involved in the post-termination step: INTS3 binds INTS7 in the open conformation of integrator complex and prevents the rebinding of Pol II to the integrator after termination cycle (PubMed:38570683). Mediates recruitment of cytoplasmic dynein to the nuclear envelope, probably as component of the integrator complex (PubMed:23904267).</text>
</comment>
<comment type="function">
    <text evidence="3 4">Component of the SOSS complex, a multiprotein complex that functions downstream of the MRN complex to promote DNA repair and G2/M checkpoint. The SOSS complex associates with single-stranded DNA at DNA lesions and influences diverse endpoints in the cellular DNA damage response including cell-cycle checkpoint activation, recombinational repair and maintenance of genomic stability. The SOSS complex is required for efficient homologous recombination-dependent repair of double-strand breaks (DSBs) and ATM-dependent signaling pathways. In the SOSS complex, it is required for the assembly of the complex and for stabilization of the complex at DNA damage sites.</text>
</comment>
<comment type="subunit">
    <text evidence="2 3 4 6 7 8">Component of the Integrator complex, composed of core subunits INTS1, INTS2, INTS3, INTS4, INTS5, INTS6, INTS7, INTS8, INTS9/RC74, INTS10, INTS11/CPSF3L, INTS12, INTS13, INTS14 and INTS15 (PubMed:16239144, PubMed:29471365, PubMed:38570683, PubMed:39032490). The core complex associates with protein phosphatase 2A subunits PPP2CA and PPP2R1A, to form the Integrator-PP2A (INTAC) complex (PubMed:38570683). Component of the SOSS complex, composed of SOSS-B (SOSS-B1/NABP2 or SOSS-B2/NABP1), SOSS-A/INTS3 and SOSS-C/INIP (PubMed:19605351, PubMed:19683501). SOSS complexes containing SOSS-B1/NABP2 are more abundant than complexes containing SOSS-B2/NABP1 (PubMed:19605351, PubMed:19683501). Interacts with SOSS-B1/NABP2, SOSS-B2/NABP1 and SOSS-C/INIP; the interaction is direct (PubMed:19683501). Interacts with NBN/NBS1 (PubMed:19683501).</text>
</comment>
<comment type="interaction">
    <interactant intactId="EBI-2680854">
        <id>Q68E01</id>
    </interactant>
    <interactant intactId="EBI-2881520">
        <id>Q9NRY2</id>
        <label>INIP</label>
    </interactant>
    <organismsDiffer>false</organismsDiffer>
    <experiments>6</experiments>
</comment>
<comment type="interaction">
    <interactant intactId="EBI-2680854">
        <id>Q68E01</id>
    </interactant>
    <interactant intactId="EBI-2889252">
        <id>Q96AH0</id>
        <label>NABP1</label>
    </interactant>
    <organismsDiffer>false</organismsDiffer>
    <experiments>5</experiments>
</comment>
<comment type="interaction">
    <interactant intactId="EBI-2680854">
        <id>Q68E01</id>
    </interactant>
    <interactant intactId="EBI-2120336">
        <id>Q9BQ15</id>
        <label>NABP2</label>
    </interactant>
    <organismsDiffer>false</organismsDiffer>
    <experiments>11</experiments>
</comment>
<comment type="interaction">
    <interactant intactId="EBI-2680854">
        <id>Q68E01</id>
    </interactant>
    <interactant intactId="EBI-494844">
        <id>O60934</id>
        <label>NBN</label>
    </interactant>
    <organismsDiffer>false</organismsDiffer>
    <experiments>2</experiments>
</comment>
<comment type="interaction">
    <interactant intactId="EBI-2680854">
        <id>Q68E01</id>
    </interactant>
    <interactant intactId="EBI-10176632">
        <id>O43829</id>
        <label>ZBTB14</label>
    </interactant>
    <organismsDiffer>false</organismsDiffer>
    <experiments>3</experiments>
</comment>
<comment type="subcellular location">
    <subcellularLocation>
        <location evidence="3 4 5 6 8">Nucleus</location>
    </subcellularLocation>
    <subcellularLocation>
        <location evidence="5">Cytoplasm</location>
    </subcellularLocation>
    <text evidence="4">Localizes to nuclear foci following DNA damage.</text>
</comment>
<comment type="alternative products">
    <event type="alternative splicing"/>
    <isoform>
        <id>Q68E01-1</id>
        <name>1</name>
        <sequence type="displayed"/>
    </isoform>
    <isoform>
        <id>Q68E01-2</id>
        <name>2</name>
        <sequence type="described" ref="VSP_021446"/>
    </isoform>
    <isoform>
        <id>Q68E01-3</id>
        <name>3</name>
        <sequence type="described" ref="VSP_038131 VSP_038132"/>
    </isoform>
    <isoform>
        <id>Q68E01-4</id>
        <name>4</name>
        <sequence type="described" ref="VSP_038130"/>
    </isoform>
</comment>
<comment type="similarity">
    <text evidence="13">Belongs to the Integrator subunit 3 family.</text>
</comment>
<comment type="sequence caution" evidence="13">
    <conflict type="erroneous initiation">
        <sequence resource="EMBL-CDS" id="AAH25254"/>
    </conflict>
    <text>Truncated N-terminus.</text>
</comment>
<comment type="sequence caution" evidence="13">
    <conflict type="erroneous initiation">
        <sequence resource="EMBL-CDS" id="AAH54513"/>
    </conflict>
    <text>Truncated N-terminus.</text>
</comment>
<comment type="sequence caution" evidence="13">
    <conflict type="erroneous initiation">
        <sequence resource="EMBL-CDS" id="BAB15174"/>
    </conflict>
    <text>Truncated N-terminus.</text>
</comment>
<comment type="sequence caution" evidence="13">
    <conflict type="erroneous initiation">
        <sequence resource="EMBL-CDS" id="BAC11329"/>
    </conflict>
    <text>Truncated N-terminus.</text>
</comment>
<comment type="sequence caution" evidence="13">
    <conflict type="miscellaneous discrepancy">
        <sequence resource="EMBL-CDS" id="CAH18229"/>
    </conflict>
    <text>Intron retention.</text>
</comment>
<name>INT3_HUMAN</name>
<accession>Q68E01</accession>
<accession>A8K1W0</accession>
<accession>B4DQC8</accession>
<accession>B4E3U9</accession>
<accession>D3DV57</accession>
<accession>Q4G0E5</accession>
<accession>Q5VUQ5</accession>
<accession>Q5VUQ6</accession>
<accession>Q5VUR0</accession>
<accession>Q5VUR1</accession>
<accession>Q68DJ1</accession>
<accession>Q69YR5</accession>
<accession>Q6AI57</accession>
<accession>Q6DKG7</accession>
<accession>Q6MZQ4</accession>
<accession>Q6MZZ9</accession>
<accession>Q8NC46</accession>
<accession>Q8TB23</accession>
<accession>Q9H6S9</accession>
<reference key="1">
    <citation type="journal article" date="2007" name="BMC Genomics">
        <title>The full-ORF clone resource of the German cDNA consortium.</title>
        <authorList>
            <person name="Bechtel S."/>
            <person name="Rosenfelder H."/>
            <person name="Duda A."/>
            <person name="Schmidt C.P."/>
            <person name="Ernst U."/>
            <person name="Wellenreuther R."/>
            <person name="Mehrle A."/>
            <person name="Schuster C."/>
            <person name="Bahr A."/>
            <person name="Bloecker H."/>
            <person name="Heubner D."/>
            <person name="Hoerlein A."/>
            <person name="Michel G."/>
            <person name="Wedler H."/>
            <person name="Koehrer K."/>
            <person name="Ottenwaelder B."/>
            <person name="Poustka A."/>
            <person name="Wiemann S."/>
            <person name="Schupp I."/>
        </authorList>
    </citation>
    <scope>NUCLEOTIDE SEQUENCE [LARGE SCALE MRNA] (ISOFORMS 1 AND 2)</scope>
    <source>
        <tissue>Amygdala</tissue>
        <tissue>Cervix</tissue>
        <tissue>Fetal kidney</tissue>
        <tissue>Retina</tissue>
        <tissue>Testis</tissue>
    </source>
</reference>
<reference key="2">
    <citation type="journal article" date="2004" name="Nat. Genet.">
        <title>Complete sequencing and characterization of 21,243 full-length human cDNAs.</title>
        <authorList>
            <person name="Ota T."/>
            <person name="Suzuki Y."/>
            <person name="Nishikawa T."/>
            <person name="Otsuki T."/>
            <person name="Sugiyama T."/>
            <person name="Irie R."/>
            <person name="Wakamatsu A."/>
            <person name="Hayashi K."/>
            <person name="Sato H."/>
            <person name="Nagai K."/>
            <person name="Kimura K."/>
            <person name="Makita H."/>
            <person name="Sekine M."/>
            <person name="Obayashi M."/>
            <person name="Nishi T."/>
            <person name="Shibahara T."/>
            <person name="Tanaka T."/>
            <person name="Ishii S."/>
            <person name="Yamamoto J."/>
            <person name="Saito K."/>
            <person name="Kawai Y."/>
            <person name="Isono Y."/>
            <person name="Nakamura Y."/>
            <person name="Nagahari K."/>
            <person name="Murakami K."/>
            <person name="Yasuda T."/>
            <person name="Iwayanagi T."/>
            <person name="Wagatsuma M."/>
            <person name="Shiratori A."/>
            <person name="Sudo H."/>
            <person name="Hosoiri T."/>
            <person name="Kaku Y."/>
            <person name="Kodaira H."/>
            <person name="Kondo H."/>
            <person name="Sugawara M."/>
            <person name="Takahashi M."/>
            <person name="Kanda K."/>
            <person name="Yokoi T."/>
            <person name="Furuya T."/>
            <person name="Kikkawa E."/>
            <person name="Omura Y."/>
            <person name="Abe K."/>
            <person name="Kamihara K."/>
            <person name="Katsuta N."/>
            <person name="Sato K."/>
            <person name="Tanikawa M."/>
            <person name="Yamazaki M."/>
            <person name="Ninomiya K."/>
            <person name="Ishibashi T."/>
            <person name="Yamashita H."/>
            <person name="Murakawa K."/>
            <person name="Fujimori K."/>
            <person name="Tanai H."/>
            <person name="Kimata M."/>
            <person name="Watanabe M."/>
            <person name="Hiraoka S."/>
            <person name="Chiba Y."/>
            <person name="Ishida S."/>
            <person name="Ono Y."/>
            <person name="Takiguchi S."/>
            <person name="Watanabe S."/>
            <person name="Yosida M."/>
            <person name="Hotuta T."/>
            <person name="Kusano J."/>
            <person name="Kanehori K."/>
            <person name="Takahashi-Fujii A."/>
            <person name="Hara H."/>
            <person name="Tanase T.-O."/>
            <person name="Nomura Y."/>
            <person name="Togiya S."/>
            <person name="Komai F."/>
            <person name="Hara R."/>
            <person name="Takeuchi K."/>
            <person name="Arita M."/>
            <person name="Imose N."/>
            <person name="Musashino K."/>
            <person name="Yuuki H."/>
            <person name="Oshima A."/>
            <person name="Sasaki N."/>
            <person name="Aotsuka S."/>
            <person name="Yoshikawa Y."/>
            <person name="Matsunawa H."/>
            <person name="Ichihara T."/>
            <person name="Shiohata N."/>
            <person name="Sano S."/>
            <person name="Moriya S."/>
            <person name="Momiyama H."/>
            <person name="Satoh N."/>
            <person name="Takami S."/>
            <person name="Terashima Y."/>
            <person name="Suzuki O."/>
            <person name="Nakagawa S."/>
            <person name="Senoh A."/>
            <person name="Mizoguchi H."/>
            <person name="Goto Y."/>
            <person name="Shimizu F."/>
            <person name="Wakebe H."/>
            <person name="Hishigaki H."/>
            <person name="Watanabe T."/>
            <person name="Sugiyama A."/>
            <person name="Takemoto M."/>
            <person name="Kawakami B."/>
            <person name="Yamazaki M."/>
            <person name="Watanabe K."/>
            <person name="Kumagai A."/>
            <person name="Itakura S."/>
            <person name="Fukuzumi Y."/>
            <person name="Fujimori Y."/>
            <person name="Komiyama M."/>
            <person name="Tashiro H."/>
            <person name="Tanigami A."/>
            <person name="Fujiwara T."/>
            <person name="Ono T."/>
            <person name="Yamada K."/>
            <person name="Fujii Y."/>
            <person name="Ozaki K."/>
            <person name="Hirao M."/>
            <person name="Ohmori Y."/>
            <person name="Kawabata A."/>
            <person name="Hikiji T."/>
            <person name="Kobatake N."/>
            <person name="Inagaki H."/>
            <person name="Ikema Y."/>
            <person name="Okamoto S."/>
            <person name="Okitani R."/>
            <person name="Kawakami T."/>
            <person name="Noguchi S."/>
            <person name="Itoh T."/>
            <person name="Shigeta K."/>
            <person name="Senba T."/>
            <person name="Matsumura K."/>
            <person name="Nakajima Y."/>
            <person name="Mizuno T."/>
            <person name="Morinaga M."/>
            <person name="Sasaki M."/>
            <person name="Togashi T."/>
            <person name="Oyama M."/>
            <person name="Hata H."/>
            <person name="Watanabe M."/>
            <person name="Komatsu T."/>
            <person name="Mizushima-Sugano J."/>
            <person name="Satoh T."/>
            <person name="Shirai Y."/>
            <person name="Takahashi Y."/>
            <person name="Nakagawa K."/>
            <person name="Okumura K."/>
            <person name="Nagase T."/>
            <person name="Nomura N."/>
            <person name="Kikuchi H."/>
            <person name="Masuho Y."/>
            <person name="Yamashita R."/>
            <person name="Nakai K."/>
            <person name="Yada T."/>
            <person name="Nakamura Y."/>
            <person name="Ohara O."/>
            <person name="Isogai T."/>
            <person name="Sugano S."/>
        </authorList>
    </citation>
    <scope>NUCLEOTIDE SEQUENCE [LARGE SCALE MRNA] (ISOFORMS 2; 3 AND 4)</scope>
    <source>
        <tissue>Hepatoma</tissue>
        <tissue>Hippocampus</tissue>
        <tissue>Teratocarcinoma</tissue>
        <tissue>Uterus</tissue>
    </source>
</reference>
<reference key="3">
    <citation type="journal article" date="2006" name="Nature">
        <title>The DNA sequence and biological annotation of human chromosome 1.</title>
        <authorList>
            <person name="Gregory S.G."/>
            <person name="Barlow K.F."/>
            <person name="McLay K.E."/>
            <person name="Kaul R."/>
            <person name="Swarbreck D."/>
            <person name="Dunham A."/>
            <person name="Scott C.E."/>
            <person name="Howe K.L."/>
            <person name="Woodfine K."/>
            <person name="Spencer C.C.A."/>
            <person name="Jones M.C."/>
            <person name="Gillson C."/>
            <person name="Searle S."/>
            <person name="Zhou Y."/>
            <person name="Kokocinski F."/>
            <person name="McDonald L."/>
            <person name="Evans R."/>
            <person name="Phillips K."/>
            <person name="Atkinson A."/>
            <person name="Cooper R."/>
            <person name="Jones C."/>
            <person name="Hall R.E."/>
            <person name="Andrews T.D."/>
            <person name="Lloyd C."/>
            <person name="Ainscough R."/>
            <person name="Almeida J.P."/>
            <person name="Ambrose K.D."/>
            <person name="Anderson F."/>
            <person name="Andrew R.W."/>
            <person name="Ashwell R.I.S."/>
            <person name="Aubin K."/>
            <person name="Babbage A.K."/>
            <person name="Bagguley C.L."/>
            <person name="Bailey J."/>
            <person name="Beasley H."/>
            <person name="Bethel G."/>
            <person name="Bird C.P."/>
            <person name="Bray-Allen S."/>
            <person name="Brown J.Y."/>
            <person name="Brown A.J."/>
            <person name="Buckley D."/>
            <person name="Burton J."/>
            <person name="Bye J."/>
            <person name="Carder C."/>
            <person name="Chapman J.C."/>
            <person name="Clark S.Y."/>
            <person name="Clarke G."/>
            <person name="Clee C."/>
            <person name="Cobley V."/>
            <person name="Collier R.E."/>
            <person name="Corby N."/>
            <person name="Coville G.J."/>
            <person name="Davies J."/>
            <person name="Deadman R."/>
            <person name="Dunn M."/>
            <person name="Earthrowl M."/>
            <person name="Ellington A.G."/>
            <person name="Errington H."/>
            <person name="Frankish A."/>
            <person name="Frankland J."/>
            <person name="French L."/>
            <person name="Garner P."/>
            <person name="Garnett J."/>
            <person name="Gay L."/>
            <person name="Ghori M.R.J."/>
            <person name="Gibson R."/>
            <person name="Gilby L.M."/>
            <person name="Gillett W."/>
            <person name="Glithero R.J."/>
            <person name="Grafham D.V."/>
            <person name="Griffiths C."/>
            <person name="Griffiths-Jones S."/>
            <person name="Grocock R."/>
            <person name="Hammond S."/>
            <person name="Harrison E.S.I."/>
            <person name="Hart E."/>
            <person name="Haugen E."/>
            <person name="Heath P.D."/>
            <person name="Holmes S."/>
            <person name="Holt K."/>
            <person name="Howden P.J."/>
            <person name="Hunt A.R."/>
            <person name="Hunt S.E."/>
            <person name="Hunter G."/>
            <person name="Isherwood J."/>
            <person name="James R."/>
            <person name="Johnson C."/>
            <person name="Johnson D."/>
            <person name="Joy A."/>
            <person name="Kay M."/>
            <person name="Kershaw J.K."/>
            <person name="Kibukawa M."/>
            <person name="Kimberley A.M."/>
            <person name="King A."/>
            <person name="Knights A.J."/>
            <person name="Lad H."/>
            <person name="Laird G."/>
            <person name="Lawlor S."/>
            <person name="Leongamornlert D.A."/>
            <person name="Lloyd D.M."/>
            <person name="Loveland J."/>
            <person name="Lovell J."/>
            <person name="Lush M.J."/>
            <person name="Lyne R."/>
            <person name="Martin S."/>
            <person name="Mashreghi-Mohammadi M."/>
            <person name="Matthews L."/>
            <person name="Matthews N.S.W."/>
            <person name="McLaren S."/>
            <person name="Milne S."/>
            <person name="Mistry S."/>
            <person name="Moore M.J.F."/>
            <person name="Nickerson T."/>
            <person name="O'Dell C.N."/>
            <person name="Oliver K."/>
            <person name="Palmeiri A."/>
            <person name="Palmer S.A."/>
            <person name="Parker A."/>
            <person name="Patel D."/>
            <person name="Pearce A.V."/>
            <person name="Peck A.I."/>
            <person name="Pelan S."/>
            <person name="Phelps K."/>
            <person name="Phillimore B.J."/>
            <person name="Plumb R."/>
            <person name="Rajan J."/>
            <person name="Raymond C."/>
            <person name="Rouse G."/>
            <person name="Saenphimmachak C."/>
            <person name="Sehra H.K."/>
            <person name="Sheridan E."/>
            <person name="Shownkeen R."/>
            <person name="Sims S."/>
            <person name="Skuce C.D."/>
            <person name="Smith M."/>
            <person name="Steward C."/>
            <person name="Subramanian S."/>
            <person name="Sycamore N."/>
            <person name="Tracey A."/>
            <person name="Tromans A."/>
            <person name="Van Helmond Z."/>
            <person name="Wall M."/>
            <person name="Wallis J.M."/>
            <person name="White S."/>
            <person name="Whitehead S.L."/>
            <person name="Wilkinson J.E."/>
            <person name="Willey D.L."/>
            <person name="Williams H."/>
            <person name="Wilming L."/>
            <person name="Wray P.W."/>
            <person name="Wu Z."/>
            <person name="Coulson A."/>
            <person name="Vaudin M."/>
            <person name="Sulston J.E."/>
            <person name="Durbin R.M."/>
            <person name="Hubbard T."/>
            <person name="Wooster R."/>
            <person name="Dunham I."/>
            <person name="Carter N.P."/>
            <person name="McVean G."/>
            <person name="Ross M.T."/>
            <person name="Harrow J."/>
            <person name="Olson M.V."/>
            <person name="Beck S."/>
            <person name="Rogers J."/>
            <person name="Bentley D.R."/>
        </authorList>
    </citation>
    <scope>NUCLEOTIDE SEQUENCE [LARGE SCALE GENOMIC DNA]</scope>
</reference>
<reference key="4">
    <citation type="submission" date="2005-09" db="EMBL/GenBank/DDBJ databases">
        <authorList>
            <person name="Mural R.J."/>
            <person name="Istrail S."/>
            <person name="Sutton G.G."/>
            <person name="Florea L."/>
            <person name="Halpern A.L."/>
            <person name="Mobarry C.M."/>
            <person name="Lippert R."/>
            <person name="Walenz B."/>
            <person name="Shatkay H."/>
            <person name="Dew I."/>
            <person name="Miller J.R."/>
            <person name="Flanigan M.J."/>
            <person name="Edwards N.J."/>
            <person name="Bolanos R."/>
            <person name="Fasulo D."/>
            <person name="Halldorsson B.V."/>
            <person name="Hannenhalli S."/>
            <person name="Turner R."/>
            <person name="Yooseph S."/>
            <person name="Lu F."/>
            <person name="Nusskern D.R."/>
            <person name="Shue B.C."/>
            <person name="Zheng X.H."/>
            <person name="Zhong F."/>
            <person name="Delcher A.L."/>
            <person name="Huson D.H."/>
            <person name="Kravitz S.A."/>
            <person name="Mouchard L."/>
            <person name="Reinert K."/>
            <person name="Remington K.A."/>
            <person name="Clark A.G."/>
            <person name="Waterman M.S."/>
            <person name="Eichler E.E."/>
            <person name="Adams M.D."/>
            <person name="Hunkapiller M.W."/>
            <person name="Myers E.W."/>
            <person name="Venter J.C."/>
        </authorList>
    </citation>
    <scope>NUCLEOTIDE SEQUENCE [LARGE SCALE GENOMIC DNA]</scope>
</reference>
<reference key="5">
    <citation type="journal article" date="2004" name="Genome Res.">
        <title>The status, quality, and expansion of the NIH full-length cDNA project: the Mammalian Gene Collection (MGC).</title>
        <authorList>
            <consortium name="The MGC Project Team"/>
        </authorList>
    </citation>
    <scope>NUCLEOTIDE SEQUENCE [LARGE SCALE MRNA] (ISOFORM 2)</scope>
    <source>
        <tissue>Brain</tissue>
        <tissue>Lung</tissue>
        <tissue>Skin</tissue>
        <tissue>Testis</tissue>
        <tissue>Uterus</tissue>
    </source>
</reference>
<reference key="6">
    <citation type="journal article" date="2005" name="Cell">
        <title>Integrator, a multiprotein mediator of small nuclear RNA processing, associates with the C-terminal repeat of RNA polymerase II.</title>
        <authorList>
            <person name="Baillat D."/>
            <person name="Hakimi M.-A."/>
            <person name="Naeaer A.M."/>
            <person name="Shilatifard A."/>
            <person name="Cooch N."/>
            <person name="Shiekhattar R."/>
        </authorList>
    </citation>
    <scope>FUNCTION</scope>
    <scope>IDENTIFICATION BY MASS SPECTROMETRY</scope>
    <scope>IDENTIFICATION IN THE INTEGRATOR COMPLEX</scope>
</reference>
<reference key="7">
    <citation type="journal article" date="2008" name="Proc. Natl. Acad. Sci. U.S.A.">
        <title>A quantitative atlas of mitotic phosphorylation.</title>
        <authorList>
            <person name="Dephoure N."/>
            <person name="Zhou C."/>
            <person name="Villen J."/>
            <person name="Beausoleil S.A."/>
            <person name="Bakalarski C.E."/>
            <person name="Elledge S.J."/>
            <person name="Gygi S.P."/>
        </authorList>
    </citation>
    <scope>PHOSPHORYLATION [LARGE SCALE ANALYSIS] AT SER-502 AND SER-537</scope>
    <scope>IDENTIFICATION BY MASS SPECTROMETRY [LARGE SCALE ANALYSIS]</scope>
    <source>
        <tissue>Cervix carcinoma</tissue>
    </source>
</reference>
<reference key="8">
    <citation type="journal article" date="2009" name="Anal. Chem.">
        <title>Lys-N and trypsin cover complementary parts of the phosphoproteome in a refined SCX-based approach.</title>
        <authorList>
            <person name="Gauci S."/>
            <person name="Helbig A.O."/>
            <person name="Slijper M."/>
            <person name="Krijgsveld J."/>
            <person name="Heck A.J."/>
            <person name="Mohammed S."/>
        </authorList>
    </citation>
    <scope>IDENTIFICATION BY MASS SPECTROMETRY [LARGE SCALE ANALYSIS]</scope>
</reference>
<reference key="9">
    <citation type="journal article" date="2009" name="J. Biol. Chem.">
        <title>hSSB1 and hSSB2 form similar multiprotein complexes that participate in DNA damage response.</title>
        <authorList>
            <person name="Li Y."/>
            <person name="Bolderson E."/>
            <person name="Kumar R."/>
            <person name="Muniandy P.A."/>
            <person name="Xue Y."/>
            <person name="Richard D.J."/>
            <person name="Seidman M."/>
            <person name="Pandita T.K."/>
            <person name="Khanna K.K."/>
            <person name="Wang W."/>
        </authorList>
    </citation>
    <scope>FUNCTION</scope>
    <scope>SUBCELLULAR LOCATION</scope>
    <scope>IDENTIFICATION IN THE SOSS COMPLEX</scope>
</reference>
<reference key="10">
    <citation type="journal article" date="2009" name="Mol. Cell">
        <title>SOSS complexes participate in the maintenance of genomic stability.</title>
        <authorList>
            <person name="Huang J."/>
            <person name="Gong Z."/>
            <person name="Ghosal G."/>
            <person name="Chen J."/>
        </authorList>
    </citation>
    <scope>FUNCTION IN THE SOSS COMPLEX</scope>
    <scope>SUBCELLULAR LOCATION</scope>
    <scope>IDENTIFICATION IN THE SOSS COMPLEX</scope>
    <scope>INTERACTION WITH NABP1; INIP AND NBN</scope>
</reference>
<reference key="11">
    <citation type="journal article" date="2010" name="Sci. Signal.">
        <title>Quantitative phosphoproteomics reveals widespread full phosphorylation site occupancy during mitosis.</title>
        <authorList>
            <person name="Olsen J.V."/>
            <person name="Vermeulen M."/>
            <person name="Santamaria A."/>
            <person name="Kumar C."/>
            <person name="Miller M.L."/>
            <person name="Jensen L.J."/>
            <person name="Gnad F."/>
            <person name="Cox J."/>
            <person name="Jensen T.S."/>
            <person name="Nigg E.A."/>
            <person name="Brunak S."/>
            <person name="Mann M."/>
        </authorList>
    </citation>
    <scope>PHOSPHORYLATION [LARGE SCALE ANALYSIS] AT SER-995</scope>
    <scope>IDENTIFICATION BY MASS SPECTROMETRY [LARGE SCALE ANALYSIS]</scope>
    <source>
        <tissue>Cervix carcinoma</tissue>
    </source>
</reference>
<reference key="12">
    <citation type="journal article" date="2011" name="BMC Syst. Biol.">
        <title>Initial characterization of the human central proteome.</title>
        <authorList>
            <person name="Burkard T.R."/>
            <person name="Planyavsky M."/>
            <person name="Kaupe I."/>
            <person name="Breitwieser F.P."/>
            <person name="Buerckstuemmer T."/>
            <person name="Bennett K.L."/>
            <person name="Superti-Furga G."/>
            <person name="Colinge J."/>
        </authorList>
    </citation>
    <scope>IDENTIFICATION BY MASS SPECTROMETRY [LARGE SCALE ANALYSIS]</scope>
</reference>
<reference key="13">
    <citation type="journal article" date="2011" name="Sci. Signal.">
        <title>System-wide temporal characterization of the proteome and phosphoproteome of human embryonic stem cell differentiation.</title>
        <authorList>
            <person name="Rigbolt K.T."/>
            <person name="Prokhorova T.A."/>
            <person name="Akimov V."/>
            <person name="Henningsen J."/>
            <person name="Johansen P.T."/>
            <person name="Kratchmarova I."/>
            <person name="Kassem M."/>
            <person name="Mann M."/>
            <person name="Olsen J.V."/>
            <person name="Blagoev B."/>
        </authorList>
    </citation>
    <scope>PHOSPHORYLATION [LARGE SCALE ANALYSIS] AT SER-537</scope>
    <scope>IDENTIFICATION BY MASS SPECTROMETRY [LARGE SCALE ANALYSIS]</scope>
</reference>
<reference key="14">
    <citation type="journal article" date="2012" name="Proc. Natl. Acad. Sci. U.S.A.">
        <title>N-terminal acetylome analyses and functional insights of the N-terminal acetyltransferase NatB.</title>
        <authorList>
            <person name="Van Damme P."/>
            <person name="Lasa M."/>
            <person name="Polevoda B."/>
            <person name="Gazquez C."/>
            <person name="Elosegui-Artola A."/>
            <person name="Kim D.S."/>
            <person name="De Juan-Pardo E."/>
            <person name="Demeyer K."/>
            <person name="Hole K."/>
            <person name="Larrea E."/>
            <person name="Timmerman E."/>
            <person name="Prieto J."/>
            <person name="Arnesen T."/>
            <person name="Sherman F."/>
            <person name="Gevaert K."/>
            <person name="Aldabe R."/>
        </authorList>
    </citation>
    <scope>ACETYLATION [LARGE SCALE ANALYSIS] AT MET-1</scope>
    <scope>IDENTIFICATION BY MASS SPECTROMETRY [LARGE SCALE ANALYSIS]</scope>
</reference>
<reference key="15">
    <citation type="journal article" date="2013" name="J. Proteome Res.">
        <title>Toward a comprehensive characterization of a human cancer cell phosphoproteome.</title>
        <authorList>
            <person name="Zhou H."/>
            <person name="Di Palma S."/>
            <person name="Preisinger C."/>
            <person name="Peng M."/>
            <person name="Polat A.N."/>
            <person name="Heck A.J."/>
            <person name="Mohammed S."/>
        </authorList>
    </citation>
    <scope>PHOSPHORYLATION [LARGE SCALE ANALYSIS] AT SER-502 AND SER-537</scope>
    <scope>IDENTIFICATION BY MASS SPECTROMETRY [LARGE SCALE ANALYSIS]</scope>
    <source>
        <tissue>Cervix carcinoma</tissue>
        <tissue>Erythroleukemia</tissue>
    </source>
</reference>
<reference key="16">
    <citation type="journal article" date="2013" name="Mol. Biol. Cell">
        <title>Nuclear-localized Asunder regulates cytoplasmic dynein localization via its role in the integrator complex.</title>
        <authorList>
            <person name="Jodoin J.N."/>
            <person name="Sitaram P."/>
            <person name="Albrecht T.R."/>
            <person name="May S.B."/>
            <person name="Shboul M."/>
            <person name="Lee E."/>
            <person name="Reversade B."/>
            <person name="Wagner E.J."/>
            <person name="Lee L.A."/>
        </authorList>
    </citation>
    <scope>FUNCTION</scope>
    <scope>SUBCELLULAR LOCATION</scope>
</reference>
<reference key="17">
    <citation type="journal article" date="2014" name="J. Proteomics">
        <title>An enzyme assisted RP-RPLC approach for in-depth analysis of human liver phosphoproteome.</title>
        <authorList>
            <person name="Bian Y."/>
            <person name="Song C."/>
            <person name="Cheng K."/>
            <person name="Dong M."/>
            <person name="Wang F."/>
            <person name="Huang J."/>
            <person name="Sun D."/>
            <person name="Wang L."/>
            <person name="Ye M."/>
            <person name="Zou H."/>
        </authorList>
    </citation>
    <scope>PHOSPHORYLATION [LARGE SCALE ANALYSIS] AT SER-502</scope>
    <scope>IDENTIFICATION BY MASS SPECTROMETRY [LARGE SCALE ANALYSIS]</scope>
    <source>
        <tissue>Liver</tissue>
    </source>
</reference>
<reference key="18">
    <citation type="journal article" date="2024" name="Mol. Cell">
        <title>Cytoplasmic binding partners of the Integrator endonuclease INTS11 and its paralog CPSF73 are required for their nuclear function.</title>
        <authorList>
            <person name="Lin M.H."/>
            <person name="Jensen M.K."/>
            <person name="Elrod N.D."/>
            <person name="Chu H.F."/>
            <person name="Haseley M."/>
            <person name="Beam A.C."/>
            <person name="Huang K.L."/>
            <person name="Chiang W."/>
            <person name="Russell W.K."/>
            <person name="Williams K."/>
            <person name="Proschel C."/>
            <person name="Wagner E.J."/>
            <person name="Tong L."/>
        </authorList>
    </citation>
    <scope>IDENTIFICATION IN THE INTEGRATOR COMPLEX</scope>
    <scope>SUBCELLULAR LOCATION</scope>
</reference>
<reference key="19">
    <citation type="journal article" date="2018" name="Nucleic Acids Res.">
        <title>Integrator subunit 4 is a 'Symplekin-like' scaffold that associates with INTS9/11 to form the Integrator cleavage module.</title>
        <authorList>
            <person name="Albrecht T.R."/>
            <person name="Shevtsov S.P."/>
            <person name="Wu Y."/>
            <person name="Mascibroda L.G."/>
            <person name="Peart N.J."/>
            <person name="Huang K.L."/>
            <person name="Sawyer I.A."/>
            <person name="Tong L."/>
            <person name="Dundr M."/>
            <person name="Wagner E.J."/>
        </authorList>
    </citation>
    <scope>STRUCTURE BY ELECTRON MICROSCOPY (3.10 ANGSTROMS) OF INTAC COMPLEX</scope>
    <scope>FUNCTION</scope>
    <scope>IDENTIFICATION IN THE INTAC COMPLEX</scope>
</reference>
<reference evidence="15" key="20">
    <citation type="journal article" date="2024" name="Nature">
        <title>Structural basis of Integrator-dependent RNA polymerase II termination.</title>
        <authorList>
            <person name="Fianu I."/>
            <person name="Ochmann M."/>
            <person name="Walshe J.L."/>
            <person name="Dybkov O."/>
            <person name="Cruz J.N."/>
            <person name="Urlaub H."/>
            <person name="Cramer P."/>
        </authorList>
    </citation>
    <scope>STRUCTURE BY ELECTRON MICROSCOPY (3.10 ANGSTROMS) OF INTEGRATOR COMPLEX</scope>
</reference>
<keyword id="KW-0002">3D-structure</keyword>
<keyword id="KW-0007">Acetylation</keyword>
<keyword id="KW-0025">Alternative splicing</keyword>
<keyword id="KW-0963">Cytoplasm</keyword>
<keyword id="KW-0227">DNA damage</keyword>
<keyword id="KW-0234">DNA repair</keyword>
<keyword id="KW-0539">Nucleus</keyword>
<keyword id="KW-0597">Phosphoprotein</keyword>
<keyword id="KW-1267">Proteomics identification</keyword>
<keyword id="KW-1185">Reference proteome</keyword>
<evidence type="ECO:0000256" key="1">
    <source>
        <dbReference type="SAM" id="MobiDB-lite"/>
    </source>
</evidence>
<evidence type="ECO:0000269" key="2">
    <source>
    </source>
</evidence>
<evidence type="ECO:0000269" key="3">
    <source>
    </source>
</evidence>
<evidence type="ECO:0000269" key="4">
    <source>
    </source>
</evidence>
<evidence type="ECO:0000269" key="5">
    <source>
    </source>
</evidence>
<evidence type="ECO:0000269" key="6">
    <source>
    </source>
</evidence>
<evidence type="ECO:0000269" key="7">
    <source>
    </source>
</evidence>
<evidence type="ECO:0000269" key="8">
    <source>
    </source>
</evidence>
<evidence type="ECO:0000303" key="9">
    <source>
    </source>
</evidence>
<evidence type="ECO:0000303" key="10">
    <source>
    </source>
</evidence>
<evidence type="ECO:0000303" key="11">
    <source>
    </source>
</evidence>
<evidence type="ECO:0000303" key="12">
    <source>
    </source>
</evidence>
<evidence type="ECO:0000305" key="13"/>
<evidence type="ECO:0000312" key="14">
    <source>
        <dbReference type="HGNC" id="HGNC:26153"/>
    </source>
</evidence>
<evidence type="ECO:0007744" key="15">
    <source>
        <dbReference type="PDB" id="8RBZ"/>
    </source>
</evidence>
<evidence type="ECO:0007744" key="16">
    <source>
    </source>
</evidence>
<evidence type="ECO:0007744" key="17">
    <source>
    </source>
</evidence>
<evidence type="ECO:0007744" key="18">
    <source>
    </source>
</evidence>
<evidence type="ECO:0007744" key="19">
    <source>
    </source>
</evidence>
<evidence type="ECO:0007744" key="20">
    <source>
    </source>
</evidence>
<evidence type="ECO:0007744" key="21">
    <source>
    </source>
</evidence>
<evidence type="ECO:0007829" key="22">
    <source>
        <dbReference type="PDB" id="4OWT"/>
    </source>
</evidence>
<evidence type="ECO:0007829" key="23">
    <source>
        <dbReference type="PDB" id="4OWW"/>
    </source>
</evidence>
<evidence type="ECO:0007829" key="24">
    <source>
        <dbReference type="PDB" id="6WLG"/>
    </source>
</evidence>
<evidence type="ECO:0007829" key="25">
    <source>
        <dbReference type="PDB" id="7BV7"/>
    </source>
</evidence>
<organism>
    <name type="scientific">Homo sapiens</name>
    <name type="common">Human</name>
    <dbReference type="NCBI Taxonomy" id="9606"/>
    <lineage>
        <taxon>Eukaryota</taxon>
        <taxon>Metazoa</taxon>
        <taxon>Chordata</taxon>
        <taxon>Craniata</taxon>
        <taxon>Vertebrata</taxon>
        <taxon>Euteleostomi</taxon>
        <taxon>Mammalia</taxon>
        <taxon>Eutheria</taxon>
        <taxon>Euarchontoglires</taxon>
        <taxon>Primates</taxon>
        <taxon>Haplorrhini</taxon>
        <taxon>Catarrhini</taxon>
        <taxon>Hominidae</taxon>
        <taxon>Homo</taxon>
    </lineage>
</organism>
<gene>
    <name evidence="12 14" type="primary">INTS3</name>
    <name type="synonym">C1orf193</name>
    <name type="synonym">C1orf60</name>
</gene>
<sequence>MELQKGKGAAAAAAASGAAGGGGGGAGAGAPGGGRLLLSTSLDAKDELEERLERCMSIVTSMTAGVSEREANDALNAYVCKGLPQHEEICLGLFTLILTEPAQAQKCYRDLALVSRDGMNIVLNKINQILMEKYLKLQDTCRTQLVWLVRELVKSGVLGADGVCMTFMKQIAGGGDVTAKNIWLAESVLDILTEQREWVLKSSILIAMAVYTYLRLIVDHHGTAQLQALRQKEVDFCISLLRERFMECLMIGRDLVRLLQNVARIPEFELLWKDIIHNPQALSPQFTGILQLLQSRTSRKFLACRLTPDMETKLLFMTSRVRFGQQKRYQDWFQRQYLSTPDSQSLRCDLIRYICGVVHPSNEVLSSDILPRWAIIGWLLTTCTSNVAASNAKLALFYDWLFFSPDKDSIMNIEPAILVMHHSMKPHPAITATLLDFMCRIIPNFYPPLEGHVRQGVFSSLNHIVEKRVLAHLAPLFDNPKLDKELRAMLREKFPEFCSSPSPPVEVKIEEPVSMEMDNHMSDKDESCYDNAEAAFSDDEEDLNSKGKKREFRFHPIKETVVEEPVDITPYLDQLDESLRDKVLQLQKGSDTEAQCEVMQEIVDQVLEEDFDSEQLSVLASCLQELFKAHFRGEVLPEEITEESLEESVGKPLYLIFRNLCQMQEDNSSFSLLLDLLSELYQKQPKIGYHLLYYLRASKAAAGKMNLYESFAQATQLGDLHTCLMMDMKACQEDDVRLLCHLTPSIYTEFPDETLRSGELLNMIVAVIDSAQLQELVCHVMMGNLVMFRKDSVLNILIQSLDWETFEQYCAWQLFLAHNIPLETIIPILQHLKYKEHPEALSCLLLQLRREKPSEEMVKMVLSRPCHPDDQFTTSILRHWCMKHDELLAEHIKSLLIKNNSLPRKRQSLRSSSSKLAQLTLEQILEHLDNLRLNLTNTKQNFFSQTPILQALQHVQASCDEAHKMKFSDLFSLAEEYEDSSTKPPKSRRKAALSSPRSRKNATQPPNAEEESGSSSASEEEDTKPKPTKRKRKGSSAVGSDSD</sequence>
<proteinExistence type="evidence at protein level"/>
<dbReference type="EMBL" id="AL832133">
    <property type="protein sequence ID" value="CAH10398.1"/>
    <property type="molecule type" value="mRNA"/>
</dbReference>
<dbReference type="EMBL" id="AK290025">
    <property type="protein sequence ID" value="BAF82714.1"/>
    <property type="molecule type" value="mRNA"/>
</dbReference>
<dbReference type="EMBL" id="AK298746">
    <property type="protein sequence ID" value="BAG60890.1"/>
    <property type="molecule type" value="mRNA"/>
</dbReference>
<dbReference type="EMBL" id="AK304874">
    <property type="protein sequence ID" value="BAG65611.1"/>
    <property type="molecule type" value="mRNA"/>
</dbReference>
<dbReference type="EMBL" id="BX640786">
    <property type="protein sequence ID" value="CAE45876.1"/>
    <property type="molecule type" value="mRNA"/>
</dbReference>
<dbReference type="EMBL" id="BX640950">
    <property type="protein sequence ID" value="CAE45974.1"/>
    <property type="molecule type" value="mRNA"/>
</dbReference>
<dbReference type="EMBL" id="CR627233">
    <property type="protein sequence ID" value="CAH10366.1"/>
    <property type="molecule type" value="mRNA"/>
</dbReference>
<dbReference type="EMBL" id="CR749212">
    <property type="protein sequence ID" value="CAH18069.1"/>
    <property type="molecule type" value="mRNA"/>
</dbReference>
<dbReference type="EMBL" id="CR749376">
    <property type="protein sequence ID" value="CAH18229.1"/>
    <property type="status" value="ALT_SEQ"/>
    <property type="molecule type" value="mRNA"/>
</dbReference>
<dbReference type="EMBL" id="AL513523">
    <property type="status" value="NOT_ANNOTATED_CDS"/>
    <property type="molecule type" value="Genomic_DNA"/>
</dbReference>
<dbReference type="EMBL" id="CH471121">
    <property type="protein sequence ID" value="EAW53279.1"/>
    <property type="molecule type" value="Genomic_DNA"/>
</dbReference>
<dbReference type="EMBL" id="CH471121">
    <property type="protein sequence ID" value="EAW53283.1"/>
    <property type="molecule type" value="Genomic_DNA"/>
</dbReference>
<dbReference type="EMBL" id="BC025254">
    <property type="protein sequence ID" value="AAH25254.1"/>
    <property type="status" value="ALT_INIT"/>
    <property type="molecule type" value="mRNA"/>
</dbReference>
<dbReference type="EMBL" id="BC054513">
    <property type="protein sequence ID" value="AAH54513.1"/>
    <property type="status" value="ALT_INIT"/>
    <property type="molecule type" value="mRNA"/>
</dbReference>
<dbReference type="EMBL" id="BC073985">
    <property type="protein sequence ID" value="AAH73985.1"/>
    <property type="molecule type" value="mRNA"/>
</dbReference>
<dbReference type="EMBL" id="BC098431">
    <property type="protein sequence ID" value="AAH98431.1"/>
    <property type="molecule type" value="mRNA"/>
</dbReference>
<dbReference type="EMBL" id="BC105092">
    <property type="protein sequence ID" value="AAI05093.1"/>
    <property type="molecule type" value="mRNA"/>
</dbReference>
<dbReference type="EMBL" id="BC105094">
    <property type="protein sequence ID" value="AAI05095.1"/>
    <property type="molecule type" value="mRNA"/>
</dbReference>
<dbReference type="EMBL" id="BC116458">
    <property type="protein sequence ID" value="AAI16459.1"/>
    <property type="molecule type" value="mRNA"/>
</dbReference>
<dbReference type="EMBL" id="AK025572">
    <property type="protein sequence ID" value="BAB15174.1"/>
    <property type="status" value="ALT_INIT"/>
    <property type="molecule type" value="mRNA"/>
</dbReference>
<dbReference type="EMBL" id="AK074979">
    <property type="protein sequence ID" value="BAC11329.1"/>
    <property type="status" value="ALT_INIT"/>
    <property type="molecule type" value="mRNA"/>
</dbReference>
<dbReference type="EMBL" id="BK005722">
    <property type="protein sequence ID" value="DAA05722.1"/>
    <property type="molecule type" value="Genomic_DNA"/>
</dbReference>
<dbReference type="CCDS" id="CCDS1052.1">
    <molecule id="Q68E01-2"/>
</dbReference>
<dbReference type="RefSeq" id="NP_001311404.1">
    <molecule id="Q68E01-2"/>
    <property type="nucleotide sequence ID" value="NM_001324475.2"/>
</dbReference>
<dbReference type="RefSeq" id="NP_075391.3">
    <molecule id="Q68E01-2"/>
    <property type="nucleotide sequence ID" value="NM_023015.4"/>
</dbReference>
<dbReference type="RefSeq" id="XP_005245518.1">
    <property type="nucleotide sequence ID" value="XM_005245461.2"/>
</dbReference>
<dbReference type="PDB" id="4OWT">
    <property type="method" value="X-ray"/>
    <property type="resolution" value="2.00 A"/>
    <property type="chains" value="A=35-499"/>
</dbReference>
<dbReference type="PDB" id="4OWW">
    <property type="method" value="X-ray"/>
    <property type="resolution" value="2.30 A"/>
    <property type="chains" value="A=1-501"/>
</dbReference>
<dbReference type="PDB" id="4OWX">
    <property type="method" value="X-ray"/>
    <property type="resolution" value="2.30 A"/>
    <property type="chains" value="A=1-501"/>
</dbReference>
<dbReference type="PDB" id="6WLG">
    <property type="method" value="X-ray"/>
    <property type="resolution" value="3.11 A"/>
    <property type="chains" value="A/B=555-977"/>
</dbReference>
<dbReference type="PDB" id="7BV7">
    <property type="method" value="X-ray"/>
    <property type="resolution" value="2.40 A"/>
    <property type="chains" value="A/B=560-995"/>
</dbReference>
<dbReference type="PDB" id="8HPP">
    <property type="method" value="X-ray"/>
    <property type="resolution" value="3.00 A"/>
    <property type="chains" value="A/B=573-1043"/>
</dbReference>
<dbReference type="PDB" id="8RBZ">
    <property type="method" value="EM"/>
    <property type="resolution" value="3.70 A"/>
    <property type="chains" value="c=1-1043"/>
</dbReference>
<dbReference type="PDBsum" id="4OWT"/>
<dbReference type="PDBsum" id="4OWW"/>
<dbReference type="PDBsum" id="4OWX"/>
<dbReference type="PDBsum" id="6WLG"/>
<dbReference type="PDBsum" id="7BV7"/>
<dbReference type="PDBsum" id="8HPP"/>
<dbReference type="PDBsum" id="8RBZ"/>
<dbReference type="EMDB" id="EMD-19040"/>
<dbReference type="SMR" id="Q68E01"/>
<dbReference type="BioGRID" id="122401">
    <property type="interactions" value="164"/>
</dbReference>
<dbReference type="ComplexPortal" id="CPX-482">
    <property type="entry name" value="SOSS1 complex"/>
</dbReference>
<dbReference type="ComplexPortal" id="CPX-614">
    <property type="entry name" value="SOSS2 complex"/>
</dbReference>
<dbReference type="ComplexPortal" id="CPX-6441">
    <property type="entry name" value="Integrator complex"/>
</dbReference>
<dbReference type="CORUM" id="Q68E01"/>
<dbReference type="FunCoup" id="Q68E01">
    <property type="interactions" value="4093"/>
</dbReference>
<dbReference type="IntAct" id="Q68E01">
    <property type="interactions" value="79"/>
</dbReference>
<dbReference type="MINT" id="Q68E01"/>
<dbReference type="STRING" id="9606.ENSP00000318641"/>
<dbReference type="GlyGen" id="Q68E01">
    <property type="glycosylation" value="1 site, 1 O-linked glycan (1 site)"/>
</dbReference>
<dbReference type="iPTMnet" id="Q68E01"/>
<dbReference type="PhosphoSitePlus" id="Q68E01"/>
<dbReference type="SwissPalm" id="Q68E01"/>
<dbReference type="BioMuta" id="INTS3"/>
<dbReference type="DMDM" id="74724494"/>
<dbReference type="jPOST" id="Q68E01"/>
<dbReference type="MassIVE" id="Q68E01"/>
<dbReference type="PaxDb" id="9606-ENSP00000318641"/>
<dbReference type="PeptideAtlas" id="Q68E01"/>
<dbReference type="ProteomicsDB" id="66123">
    <molecule id="Q68E01-1"/>
</dbReference>
<dbReference type="ProteomicsDB" id="66124">
    <molecule id="Q68E01-2"/>
</dbReference>
<dbReference type="ProteomicsDB" id="66125">
    <molecule id="Q68E01-3"/>
</dbReference>
<dbReference type="ProteomicsDB" id="66126">
    <molecule id="Q68E01-4"/>
</dbReference>
<dbReference type="Pumba" id="Q68E01"/>
<dbReference type="Antibodypedia" id="34136">
    <property type="antibodies" value="98 antibodies from 20 providers"/>
</dbReference>
<dbReference type="DNASU" id="65123"/>
<dbReference type="Ensembl" id="ENST00000318967.7">
    <molecule id="Q68E01-2"/>
    <property type="protein sequence ID" value="ENSP00000318641.2"/>
    <property type="gene ID" value="ENSG00000143624.14"/>
</dbReference>
<dbReference type="Ensembl" id="ENST00000435409.6">
    <molecule id="Q68E01-2"/>
    <property type="protein sequence ID" value="ENSP00000404290.2"/>
    <property type="gene ID" value="ENSG00000143624.14"/>
</dbReference>
<dbReference type="Ensembl" id="ENST00000512605.4">
    <molecule id="Q68E01-3"/>
    <property type="protein sequence ID" value="ENSP00000425437.1"/>
    <property type="gene ID" value="ENSG00000143624.14"/>
</dbReference>
<dbReference type="Ensembl" id="ENST00000571768.5">
    <molecule id="Q68E01-2"/>
    <property type="protein sequence ID" value="ENSP00000458631.1"/>
    <property type="gene ID" value="ENSG00000262826.5"/>
</dbReference>
<dbReference type="Ensembl" id="ENST00000576030.5">
    <molecule id="Q68E01-2"/>
    <property type="protein sequence ID" value="ENSP00000460221.1"/>
    <property type="gene ID" value="ENSG00000262826.5"/>
</dbReference>
<dbReference type="Ensembl" id="ENST00000576422.4">
    <molecule id="Q68E01-3"/>
    <property type="protein sequence ID" value="ENSP00000459907.1"/>
    <property type="gene ID" value="ENSG00000262826.5"/>
</dbReference>
<dbReference type="GeneID" id="65123"/>
<dbReference type="KEGG" id="hsa:65123"/>
<dbReference type="MANE-Select" id="ENST00000318967.7">
    <molecule id="Q68E01-2"/>
    <property type="protein sequence ID" value="ENSP00000318641.2"/>
    <property type="RefSeq nucleotide sequence ID" value="NM_023015.5"/>
    <property type="RefSeq protein sequence ID" value="NP_075391.3"/>
</dbReference>
<dbReference type="UCSC" id="uc001fct.4">
    <molecule id="Q68E01-1"/>
    <property type="organism name" value="human"/>
</dbReference>
<dbReference type="AGR" id="HGNC:26153"/>
<dbReference type="CTD" id="65123"/>
<dbReference type="DisGeNET" id="65123"/>
<dbReference type="GeneCards" id="INTS3"/>
<dbReference type="HGNC" id="HGNC:26153">
    <property type="gene designation" value="INTS3"/>
</dbReference>
<dbReference type="HPA" id="ENSG00000143624">
    <property type="expression patterns" value="Low tissue specificity"/>
</dbReference>
<dbReference type="MalaCards" id="INTS3"/>
<dbReference type="MIM" id="611347">
    <property type="type" value="gene"/>
</dbReference>
<dbReference type="neXtProt" id="NX_Q68E01"/>
<dbReference type="OpenTargets" id="ENSG00000143624"/>
<dbReference type="PharmGKB" id="PA142672510"/>
<dbReference type="VEuPathDB" id="HostDB:ENSG00000143624"/>
<dbReference type="eggNOG" id="KOG4262">
    <property type="taxonomic scope" value="Eukaryota"/>
</dbReference>
<dbReference type="GeneTree" id="ENSGT00390000014184"/>
<dbReference type="HOGENOM" id="CLU_007659_0_0_1"/>
<dbReference type="InParanoid" id="Q68E01"/>
<dbReference type="OMA" id="FEQYCLW"/>
<dbReference type="OrthoDB" id="2021145at2759"/>
<dbReference type="PAN-GO" id="Q68E01">
    <property type="GO annotations" value="1 GO annotation based on evolutionary models"/>
</dbReference>
<dbReference type="PhylomeDB" id="Q68E01"/>
<dbReference type="TreeFam" id="TF323623"/>
<dbReference type="PathwayCommons" id="Q68E01"/>
<dbReference type="Reactome" id="R-HSA-6807505">
    <property type="pathway name" value="RNA polymerase II transcribes snRNA genes"/>
</dbReference>
<dbReference type="SignaLink" id="Q68E01"/>
<dbReference type="SIGNOR" id="Q68E01"/>
<dbReference type="BioGRID-ORCS" id="65123">
    <property type="hits" value="763 hits in 1170 CRISPR screens"/>
</dbReference>
<dbReference type="ChiTaRS" id="INTS3">
    <property type="organism name" value="human"/>
</dbReference>
<dbReference type="EvolutionaryTrace" id="Q68E01"/>
<dbReference type="GeneWiki" id="INTS3"/>
<dbReference type="GenomeRNAi" id="65123"/>
<dbReference type="Pharos" id="Q68E01">
    <property type="development level" value="Tbio"/>
</dbReference>
<dbReference type="PRO" id="PR:Q68E01"/>
<dbReference type="Proteomes" id="UP000005640">
    <property type="component" value="Chromosome 1"/>
</dbReference>
<dbReference type="RNAct" id="Q68E01">
    <property type="molecule type" value="protein"/>
</dbReference>
<dbReference type="Bgee" id="ENSG00000143624">
    <property type="expression patterns" value="Expressed in right uterine tube and 95 other cell types or tissues"/>
</dbReference>
<dbReference type="ExpressionAtlas" id="Q68E01">
    <property type="expression patterns" value="baseline and differential"/>
</dbReference>
<dbReference type="GO" id="GO:0005737">
    <property type="term" value="C:cytoplasm"/>
    <property type="evidence" value="ECO:0000314"/>
    <property type="project" value="UniProtKB"/>
</dbReference>
<dbReference type="GO" id="GO:0160232">
    <property type="term" value="C:INTAC complex"/>
    <property type="evidence" value="ECO:0000314"/>
    <property type="project" value="UniProtKB"/>
</dbReference>
<dbReference type="GO" id="GO:0032039">
    <property type="term" value="C:integrator complex"/>
    <property type="evidence" value="ECO:0000314"/>
    <property type="project" value="UniProtKB"/>
</dbReference>
<dbReference type="GO" id="GO:0005654">
    <property type="term" value="C:nucleoplasm"/>
    <property type="evidence" value="ECO:0000304"/>
    <property type="project" value="Reactome"/>
</dbReference>
<dbReference type="GO" id="GO:0005634">
    <property type="term" value="C:nucleus"/>
    <property type="evidence" value="ECO:0000314"/>
    <property type="project" value="UniProtKB"/>
</dbReference>
<dbReference type="GO" id="GO:0035861">
    <property type="term" value="C:site of double-strand break"/>
    <property type="evidence" value="ECO:0000314"/>
    <property type="project" value="UniProtKB"/>
</dbReference>
<dbReference type="GO" id="GO:0070876">
    <property type="term" value="C:SOSS complex"/>
    <property type="evidence" value="ECO:0000314"/>
    <property type="project" value="UniProtKB"/>
</dbReference>
<dbReference type="GO" id="GO:0006974">
    <property type="term" value="P:DNA damage response"/>
    <property type="evidence" value="ECO:0000315"/>
    <property type="project" value="UniProtKB"/>
</dbReference>
<dbReference type="GO" id="GO:0006281">
    <property type="term" value="P:DNA repair"/>
    <property type="evidence" value="ECO:0000315"/>
    <property type="project" value="UniProtKB"/>
</dbReference>
<dbReference type="GO" id="GO:0000724">
    <property type="term" value="P:double-strand break repair via homologous recombination"/>
    <property type="evidence" value="ECO:0000314"/>
    <property type="project" value="ComplexPortal"/>
</dbReference>
<dbReference type="GO" id="GO:0044818">
    <property type="term" value="P:mitotic G2/M transition checkpoint"/>
    <property type="evidence" value="ECO:0000314"/>
    <property type="project" value="ComplexPortal"/>
</dbReference>
<dbReference type="GO" id="GO:0034243">
    <property type="term" value="P:regulation of transcription elongation by RNA polymerase II"/>
    <property type="evidence" value="ECO:0000303"/>
    <property type="project" value="ComplexPortal"/>
</dbReference>
<dbReference type="GO" id="GO:0010212">
    <property type="term" value="P:response to ionizing radiation"/>
    <property type="evidence" value="ECO:0000315"/>
    <property type="project" value="UniProtKB"/>
</dbReference>
<dbReference type="GO" id="GO:0160240">
    <property type="term" value="P:RNA polymerase II transcription initiation surveillance"/>
    <property type="evidence" value="ECO:0000314"/>
    <property type="project" value="UniProtKB"/>
</dbReference>
<dbReference type="GO" id="GO:0016180">
    <property type="term" value="P:snRNA processing"/>
    <property type="evidence" value="ECO:0000314"/>
    <property type="project" value="HGNC-UCL"/>
</dbReference>
<dbReference type="InterPro" id="IPR056518">
    <property type="entry name" value="HEAT_Ints3_C"/>
</dbReference>
<dbReference type="InterPro" id="IPR045334">
    <property type="entry name" value="INTS3"/>
</dbReference>
<dbReference type="InterPro" id="IPR019333">
    <property type="entry name" value="INTS3_N"/>
</dbReference>
<dbReference type="PANTHER" id="PTHR13587">
    <property type="entry name" value="INTEGRATOR COMPLEX SUBUNIT 3"/>
    <property type="match status" value="1"/>
</dbReference>
<dbReference type="PANTHER" id="PTHR13587:SF7">
    <property type="entry name" value="INTEGRATOR COMPLEX SUBUNIT 3"/>
    <property type="match status" value="1"/>
</dbReference>
<dbReference type="Pfam" id="PF24566">
    <property type="entry name" value="HEAT_Ints3_C"/>
    <property type="match status" value="1"/>
</dbReference>
<dbReference type="Pfam" id="PF10189">
    <property type="entry name" value="Ints3_N"/>
    <property type="match status" value="1"/>
</dbReference>
<protein>
    <recommendedName>
        <fullName evidence="13">Integrator complex subunit 3</fullName>
        <shortName>Int3</shortName>
    </recommendedName>
    <alternativeName>
        <fullName>SOSS complex subunit A</fullName>
    </alternativeName>
    <alternativeName>
        <fullName>Sensor of single-strand DNA complex subunit A</fullName>
        <shortName>SOSS-A</shortName>
        <shortName>Sensor of ssDNA subunit A</shortName>
    </alternativeName>
</protein>
<feature type="chain" id="PRO_0000259534" description="Integrator complex subunit 3">
    <location>
        <begin position="1"/>
        <end position="1043"/>
    </location>
</feature>
<feature type="region of interest" description="Disordered" evidence="1">
    <location>
        <begin position="977"/>
        <end position="1043"/>
    </location>
</feature>
<feature type="compositionally biased region" description="Acidic residues" evidence="1">
    <location>
        <begin position="1008"/>
        <end position="1022"/>
    </location>
</feature>
<feature type="modified residue" description="N-acetylmethionine" evidence="19">
    <location>
        <position position="1"/>
    </location>
</feature>
<feature type="modified residue" description="Phosphoserine" evidence="16 20 21">
    <location>
        <position position="502"/>
    </location>
</feature>
<feature type="modified residue" description="Phosphoserine" evidence="16 18 20">
    <location>
        <position position="537"/>
    </location>
</feature>
<feature type="modified residue" description="Phosphoserine" evidence="17">
    <location>
        <position position="995"/>
    </location>
</feature>
<feature type="splice variant" id="VSP_038130" description="In isoform 4." evidence="9">
    <location>
        <begin position="1"/>
        <end position="488"/>
    </location>
</feature>
<feature type="splice variant" id="VSP_038131" description="In isoform 3." evidence="9">
    <location>
        <begin position="1"/>
        <end position="207"/>
    </location>
</feature>
<feature type="splice variant" id="VSP_021446" description="In isoform 2." evidence="9 10 11">
    <location>
        <position position="173"/>
    </location>
</feature>
<feature type="splice variant" id="VSP_038132" description="In isoform 3." evidence="9">
    <original>F</original>
    <variation>CMPSTLGVQCRRCCPGPDYAWSQAGGRGRTPGATTHTRDKTTCACCLISSQTSDCFSFPALPFLPLV</variation>
    <location>
        <position position="942"/>
    </location>
</feature>
<feature type="sequence conflict" description="In Ref. 1; CAE45974." evidence="13" ref="1">
    <original>Y</original>
    <variation>C</variation>
    <location>
        <position position="134"/>
    </location>
</feature>
<feature type="sequence conflict" description="In Ref. 2; BAF82714." evidence="13" ref="2">
    <original>K</original>
    <variation>E</variation>
    <location>
        <position position="300"/>
    </location>
</feature>
<feature type="sequence conflict" description="In Ref. 1; CAE45974." evidence="13" ref="1">
    <original>E</original>
    <variation>G</variation>
    <location>
        <position position="363"/>
    </location>
</feature>
<feature type="sequence conflict" description="In Ref. 1; CAE45974." evidence="13" ref="1">
    <original>P</original>
    <variation>T</variation>
    <location>
        <position position="685"/>
    </location>
</feature>
<feature type="sequence conflict" description="In Ref. 1; CAE45876." evidence="13" ref="1">
    <original>W</original>
    <variation>R</variation>
    <location>
        <position position="803"/>
    </location>
</feature>
<feature type="sequence conflict" description="In Ref. 2; BAC11329." evidence="13" ref="2">
    <original>P</original>
    <variation>L</variation>
    <location>
        <position position="827"/>
    </location>
</feature>
<feature type="sequence conflict" description="In Ref. 2; BAG60890." evidence="13" ref="2">
    <original>L</original>
    <variation>P</variation>
    <location>
        <position position="896"/>
    </location>
</feature>
<feature type="sequence conflict" description="In Ref. 2; BAG65611." evidence="13" ref="2">
    <original>L</original>
    <variation>P</variation>
    <location>
        <position position="952"/>
    </location>
</feature>
<feature type="sequence conflict" description="In Ref. 1; CAE45876." evidence="13" ref="1">
    <original>F</original>
    <variation>L</variation>
    <location>
        <position position="967"/>
    </location>
</feature>
<feature type="sequence conflict" description="In Ref. 2; BAB15174." evidence="13" ref="2">
    <original>S</original>
    <variation>P</variation>
    <location>
        <position position="972"/>
    </location>
</feature>
<feature type="strand" evidence="22">
    <location>
        <begin position="35"/>
        <end position="37"/>
    </location>
</feature>
<feature type="strand" evidence="22">
    <location>
        <begin position="41"/>
        <end position="43"/>
    </location>
</feature>
<feature type="helix" evidence="22">
    <location>
        <begin position="47"/>
        <end position="63"/>
    </location>
</feature>
<feature type="helix" evidence="22">
    <location>
        <begin position="69"/>
        <end position="79"/>
    </location>
</feature>
<feature type="helix" evidence="22">
    <location>
        <begin position="83"/>
        <end position="99"/>
    </location>
</feature>
<feature type="turn" evidence="22">
    <location>
        <begin position="101"/>
        <end position="103"/>
    </location>
</feature>
<feature type="helix" evidence="22">
    <location>
        <begin position="104"/>
        <end position="114"/>
    </location>
</feature>
<feature type="helix" evidence="22">
    <location>
        <begin position="120"/>
        <end position="132"/>
    </location>
</feature>
<feature type="helix" evidence="22">
    <location>
        <begin position="134"/>
        <end position="136"/>
    </location>
</feature>
<feature type="helix" evidence="22">
    <location>
        <begin position="139"/>
        <end position="154"/>
    </location>
</feature>
<feature type="helix" evidence="22">
    <location>
        <begin position="160"/>
        <end position="169"/>
    </location>
</feature>
<feature type="helix" evidence="22">
    <location>
        <begin position="179"/>
        <end position="194"/>
    </location>
</feature>
<feature type="helix" evidence="22">
    <location>
        <begin position="196"/>
        <end position="199"/>
    </location>
</feature>
<feature type="helix" evidence="22">
    <location>
        <begin position="203"/>
        <end position="217"/>
    </location>
</feature>
<feature type="helix" evidence="22">
    <location>
        <begin position="224"/>
        <end position="243"/>
    </location>
</feature>
<feature type="helix" evidence="22">
    <location>
        <begin position="245"/>
        <end position="248"/>
    </location>
</feature>
<feature type="helix" evidence="22">
    <location>
        <begin position="249"/>
        <end position="251"/>
    </location>
</feature>
<feature type="helix" evidence="22">
    <location>
        <begin position="253"/>
        <end position="261"/>
    </location>
</feature>
<feature type="turn" evidence="22">
    <location>
        <begin position="262"/>
        <end position="264"/>
    </location>
</feature>
<feature type="helix" evidence="22">
    <location>
        <begin position="266"/>
        <end position="277"/>
    </location>
</feature>
<feature type="helix" evidence="22">
    <location>
        <begin position="279"/>
        <end position="282"/>
    </location>
</feature>
<feature type="helix" evidence="22">
    <location>
        <begin position="289"/>
        <end position="293"/>
    </location>
</feature>
<feature type="helix" evidence="22">
    <location>
        <begin position="299"/>
        <end position="304"/>
    </location>
</feature>
<feature type="helix" evidence="22">
    <location>
        <begin position="308"/>
        <end position="317"/>
    </location>
</feature>
<feature type="strand" evidence="23">
    <location>
        <begin position="320"/>
        <end position="322"/>
    </location>
</feature>
<feature type="helix" evidence="22">
    <location>
        <begin position="327"/>
        <end position="337"/>
    </location>
</feature>
<feature type="strand" evidence="22">
    <location>
        <begin position="338"/>
        <end position="341"/>
    </location>
</feature>
<feature type="helix" evidence="22">
    <location>
        <begin position="342"/>
        <end position="345"/>
    </location>
</feature>
<feature type="helix" evidence="22">
    <location>
        <begin position="346"/>
        <end position="356"/>
    </location>
</feature>
<feature type="helix" evidence="22">
    <location>
        <begin position="362"/>
        <end position="366"/>
    </location>
</feature>
<feature type="strand" evidence="23">
    <location>
        <begin position="367"/>
        <end position="369"/>
    </location>
</feature>
<feature type="helix" evidence="22">
    <location>
        <begin position="372"/>
        <end position="381"/>
    </location>
</feature>
<feature type="helix" evidence="22">
    <location>
        <begin position="386"/>
        <end position="396"/>
    </location>
</feature>
<feature type="turn" evidence="22">
    <location>
        <begin position="397"/>
        <end position="402"/>
    </location>
</feature>
<feature type="turn" evidence="22">
    <location>
        <begin position="405"/>
        <end position="407"/>
    </location>
</feature>
<feature type="helix" evidence="22">
    <location>
        <begin position="410"/>
        <end position="423"/>
    </location>
</feature>
<feature type="turn" evidence="22">
    <location>
        <begin position="424"/>
        <end position="426"/>
    </location>
</feature>
<feature type="helix" evidence="22">
    <location>
        <begin position="428"/>
        <end position="444"/>
    </location>
</feature>
<feature type="helix" evidence="22">
    <location>
        <begin position="447"/>
        <end position="449"/>
    </location>
</feature>
<feature type="helix" evidence="22">
    <location>
        <begin position="450"/>
        <end position="466"/>
    </location>
</feature>
<feature type="strand" evidence="22">
    <location>
        <begin position="469"/>
        <end position="471"/>
    </location>
</feature>
<feature type="helix" evidence="22">
    <location>
        <begin position="474"/>
        <end position="477"/>
    </location>
</feature>
<feature type="helix" evidence="22">
    <location>
        <begin position="484"/>
        <end position="493"/>
    </location>
</feature>
<feature type="helix" evidence="22">
    <location>
        <begin position="495"/>
        <end position="497"/>
    </location>
</feature>
<feature type="turn" evidence="25">
    <location>
        <begin position="584"/>
        <end position="586"/>
    </location>
</feature>
<feature type="helix" evidence="25">
    <location>
        <begin position="596"/>
        <end position="606"/>
    </location>
</feature>
<feature type="helix" evidence="25">
    <location>
        <begin position="617"/>
        <end position="626"/>
    </location>
</feature>
<feature type="helix" evidence="25">
    <location>
        <begin position="643"/>
        <end position="649"/>
    </location>
</feature>
<feature type="strand" evidence="24">
    <location>
        <begin position="650"/>
        <end position="652"/>
    </location>
</feature>
<feature type="helix" evidence="25">
    <location>
        <begin position="653"/>
        <end position="660"/>
    </location>
</feature>
<feature type="helix" evidence="25">
    <location>
        <begin position="672"/>
        <end position="683"/>
    </location>
</feature>
<feature type="helix" evidence="25">
    <location>
        <begin position="687"/>
        <end position="697"/>
    </location>
</feature>
<feature type="turn" evidence="25">
    <location>
        <begin position="701"/>
        <end position="703"/>
    </location>
</feature>
<feature type="helix" evidence="25">
    <location>
        <begin position="706"/>
        <end position="713"/>
    </location>
</feature>
<feature type="strand" evidence="25">
    <location>
        <begin position="715"/>
        <end position="717"/>
    </location>
</feature>
<feature type="helix" evidence="25">
    <location>
        <begin position="720"/>
        <end position="734"/>
    </location>
</feature>
<feature type="helix" evidence="25">
    <location>
        <begin position="736"/>
        <end position="749"/>
    </location>
</feature>
<feature type="helix" evidence="25">
    <location>
        <begin position="752"/>
        <end position="755"/>
    </location>
</feature>
<feature type="helix" evidence="25">
    <location>
        <begin position="759"/>
        <end position="765"/>
    </location>
</feature>
<feature type="helix" evidence="25">
    <location>
        <begin position="770"/>
        <end position="781"/>
    </location>
</feature>
<feature type="turn" evidence="25">
    <location>
        <begin position="790"/>
        <end position="792"/>
    </location>
</feature>
<feature type="helix" evidence="25">
    <location>
        <begin position="793"/>
        <end position="800"/>
    </location>
</feature>
<feature type="helix" evidence="25">
    <location>
        <begin position="805"/>
        <end position="817"/>
    </location>
</feature>
<feature type="helix" evidence="25">
    <location>
        <begin position="822"/>
        <end position="825"/>
    </location>
</feature>
<feature type="helix" evidence="25">
    <location>
        <begin position="826"/>
        <end position="830"/>
    </location>
</feature>
<feature type="turn" evidence="25">
    <location>
        <begin position="834"/>
        <end position="836"/>
    </location>
</feature>
<feature type="helix" evidence="25">
    <location>
        <begin position="838"/>
        <end position="848"/>
    </location>
</feature>
<feature type="helix" evidence="25">
    <location>
        <begin position="856"/>
        <end position="862"/>
    </location>
</feature>
<feature type="helix" evidence="25">
    <location>
        <begin position="872"/>
        <end position="883"/>
    </location>
</feature>
<feature type="helix" evidence="25">
    <location>
        <begin position="885"/>
        <end position="897"/>
    </location>
</feature>
<feature type="helix" evidence="25">
    <location>
        <begin position="921"/>
        <end position="934"/>
    </location>
</feature>
<feature type="helix" evidence="25">
    <location>
        <begin position="935"/>
        <end position="937"/>
    </location>
</feature>
<feature type="helix" evidence="25">
    <location>
        <begin position="942"/>
        <end position="944"/>
    </location>
</feature>
<feature type="helix" evidence="25">
    <location>
        <begin position="946"/>
        <end position="955"/>
    </location>
</feature>
<feature type="helix" evidence="25">
    <location>
        <begin position="956"/>
        <end position="958"/>
    </location>
</feature>
<feature type="helix" evidence="25">
    <location>
        <begin position="961"/>
        <end position="966"/>
    </location>
</feature>
<feature type="helix" evidence="25">
    <location>
        <begin position="968"/>
        <end position="971"/>
    </location>
</feature>
<feature type="turn" evidence="24">
    <location>
        <begin position="973"/>
        <end position="975"/>
    </location>
</feature>